<organism>
    <name type="scientific">Xenopus laevis</name>
    <name type="common">African clawed frog</name>
    <dbReference type="NCBI Taxonomy" id="8355"/>
    <lineage>
        <taxon>Eukaryota</taxon>
        <taxon>Metazoa</taxon>
        <taxon>Chordata</taxon>
        <taxon>Craniata</taxon>
        <taxon>Vertebrata</taxon>
        <taxon>Euteleostomi</taxon>
        <taxon>Amphibia</taxon>
        <taxon>Batrachia</taxon>
        <taxon>Anura</taxon>
        <taxon>Pipoidea</taxon>
        <taxon>Pipidae</taxon>
        <taxon>Xenopodinae</taxon>
        <taxon>Xenopus</taxon>
        <taxon>Xenopus</taxon>
    </lineage>
</organism>
<sequence length="165" mass="18883">MLMPKKDRIAIYELLFKEGVMVAKKDVHMPKHPELADKNVPNLHVMKAMQSLKSRGYVKEQFAWRHFYWYLTNEGIQYLRDFLHLPPEIVPATLRRSRPETGRPRPKGLEGERPPRLPRGETDRDTYRRSAVPSGADKKAEAGAGAATEFQFRGGFGRGRGQAPQ</sequence>
<accession>Q07254</accession>
<keyword id="KW-0002">3D-structure</keyword>
<keyword id="KW-0963">Cytoplasm</keyword>
<keyword id="KW-0903">Direct protein sequencing</keyword>
<keyword id="KW-0539">Nucleus</keyword>
<keyword id="KW-1185">Reference proteome</keyword>
<keyword id="KW-0687">Ribonucleoprotein</keyword>
<keyword id="KW-0689">Ribosomal protein</keyword>
<protein>
    <recommendedName>
        <fullName evidence="3">Small ribosomal subunit protein eS10</fullName>
    </recommendedName>
    <alternativeName>
        <fullName>40S ribosomal protein S10</fullName>
    </alternativeName>
</protein>
<dbReference type="EMBL" id="S57432">
    <property type="protein sequence ID" value="AAA14676.1"/>
    <property type="molecule type" value="mRNA"/>
</dbReference>
<dbReference type="PIR" id="I51194">
    <property type="entry name" value="I51194"/>
</dbReference>
<dbReference type="RefSeq" id="NP_001086422.1">
    <property type="nucleotide sequence ID" value="NM_001092953.1"/>
</dbReference>
<dbReference type="PDB" id="7OYC">
    <property type="method" value="EM"/>
    <property type="resolution" value="2.40 A"/>
    <property type="chains" value="K2=1-165"/>
</dbReference>
<dbReference type="PDBsum" id="7OYC"/>
<dbReference type="EMDB" id="EMD-13113"/>
<dbReference type="SMR" id="Q07254"/>
<dbReference type="BioGRID" id="103022">
    <property type="interactions" value="3"/>
</dbReference>
<dbReference type="GeneID" id="445824"/>
<dbReference type="KEGG" id="xla:445824"/>
<dbReference type="AGR" id="Xenbase:XB-GENE-969783"/>
<dbReference type="CTD" id="445824"/>
<dbReference type="Xenbase" id="XB-GENE-969783">
    <property type="gene designation" value="rps10.L"/>
</dbReference>
<dbReference type="OMA" id="YRRRDQE"/>
<dbReference type="OrthoDB" id="5211809at2759"/>
<dbReference type="Proteomes" id="UP000186698">
    <property type="component" value="Chromosome 2L"/>
</dbReference>
<dbReference type="Bgee" id="445824">
    <property type="expression patterns" value="Expressed in kidney and 19 other cell types or tissues"/>
</dbReference>
<dbReference type="GO" id="GO:0022627">
    <property type="term" value="C:cytosolic small ribosomal subunit"/>
    <property type="evidence" value="ECO:0000318"/>
    <property type="project" value="GO_Central"/>
</dbReference>
<dbReference type="GO" id="GO:0005730">
    <property type="term" value="C:nucleolus"/>
    <property type="evidence" value="ECO:0007669"/>
    <property type="project" value="UniProtKB-SubCell"/>
</dbReference>
<dbReference type="GO" id="GO:0003723">
    <property type="term" value="F:RNA binding"/>
    <property type="evidence" value="ECO:0000318"/>
    <property type="project" value="GO_Central"/>
</dbReference>
<dbReference type="GO" id="GO:0003735">
    <property type="term" value="F:structural constituent of ribosome"/>
    <property type="evidence" value="ECO:0000318"/>
    <property type="project" value="GO_Central"/>
</dbReference>
<dbReference type="FunFam" id="1.10.10.10:FF:001335">
    <property type="entry name" value="40S ribosomal protein S10"/>
    <property type="match status" value="1"/>
</dbReference>
<dbReference type="Gene3D" id="1.10.10.10">
    <property type="entry name" value="Winged helix-like DNA-binding domain superfamily/Winged helix DNA-binding domain"/>
    <property type="match status" value="1"/>
</dbReference>
<dbReference type="InterPro" id="IPR005326">
    <property type="entry name" value="Plectin_eS10_N"/>
</dbReference>
<dbReference type="InterPro" id="IPR037447">
    <property type="entry name" value="Ribosomal_eS10"/>
</dbReference>
<dbReference type="InterPro" id="IPR036388">
    <property type="entry name" value="WH-like_DNA-bd_sf"/>
</dbReference>
<dbReference type="PANTHER" id="PTHR12146">
    <property type="entry name" value="40S RIBOSOMAL PROTEIN S10"/>
    <property type="match status" value="1"/>
</dbReference>
<dbReference type="PANTHER" id="PTHR12146:SF0">
    <property type="entry name" value="RIBOSOMAL PROTEIN S10"/>
    <property type="match status" value="1"/>
</dbReference>
<dbReference type="Pfam" id="PF03501">
    <property type="entry name" value="S10_plectin"/>
    <property type="match status" value="1"/>
</dbReference>
<name>RS10_XENLA</name>
<comment type="function">
    <text evidence="1">Component of the 40S ribosomal subunit. The ribosome is a large ribonucleoprotein complex responsible for the synthesis of proteins in the cell.</text>
</comment>
<comment type="subunit">
    <text evidence="1">Component of the small ribosomal subunit.</text>
</comment>
<comment type="subcellular location">
    <subcellularLocation>
        <location evidence="1">Cytoplasm</location>
    </subcellularLocation>
    <subcellularLocation>
        <location evidence="1">Nucleus</location>
        <location evidence="1">Nucleolus</location>
    </subcellularLocation>
</comment>
<comment type="similarity">
    <text evidence="3">Belongs to the eukaryotic ribosomal protein eS10 family.</text>
</comment>
<reference key="1">
    <citation type="journal article" date="1993" name="Mol. Immunol.">
        <title>Primary structure of Xenopus laevis S10, a ribosomal protein that cross-reacts with antibodies to immunoglobulin light chains.</title>
        <authorList>
            <person name="Sarrowa J."/>
            <person name="Steiner L.A."/>
        </authorList>
    </citation>
    <scope>NUCLEOTIDE SEQUENCE [MRNA]</scope>
    <scope>PARTIAL PROTEIN SEQUENCE</scope>
</reference>
<gene>
    <name type="primary">rps10</name>
</gene>
<proteinExistence type="evidence at protein level"/>
<feature type="chain" id="PRO_0000116364" description="Small ribosomal subunit protein eS10">
    <location>
        <begin position="1"/>
        <end position="165"/>
    </location>
</feature>
<feature type="region of interest" description="Disordered" evidence="2">
    <location>
        <begin position="92"/>
        <end position="165"/>
    </location>
</feature>
<feature type="compositionally biased region" description="Basic and acidic residues" evidence="2">
    <location>
        <begin position="97"/>
        <end position="128"/>
    </location>
</feature>
<feature type="compositionally biased region" description="Low complexity" evidence="2">
    <location>
        <begin position="142"/>
        <end position="153"/>
    </location>
</feature>
<feature type="compositionally biased region" description="Gly residues" evidence="2">
    <location>
        <begin position="154"/>
        <end position="165"/>
    </location>
</feature>
<evidence type="ECO:0000250" key="1">
    <source>
        <dbReference type="UniProtKB" id="P46783"/>
    </source>
</evidence>
<evidence type="ECO:0000256" key="2">
    <source>
        <dbReference type="SAM" id="MobiDB-lite"/>
    </source>
</evidence>
<evidence type="ECO:0000305" key="3"/>